<name>PSBH_PINTH</name>
<accession>P41627</accession>
<proteinExistence type="inferred from homology"/>
<dbReference type="EMBL" id="D17510">
    <property type="protein sequence ID" value="BAA04389.1"/>
    <property type="molecule type" value="Genomic_DNA"/>
</dbReference>
<dbReference type="PIR" id="T07511">
    <property type="entry name" value="T07511"/>
</dbReference>
<dbReference type="RefSeq" id="NP_042432.1">
    <property type="nucleotide sequence ID" value="NC_001631.1"/>
</dbReference>
<dbReference type="SMR" id="P41627"/>
<dbReference type="GeneID" id="809009"/>
<dbReference type="GO" id="GO:0009535">
    <property type="term" value="C:chloroplast thylakoid membrane"/>
    <property type="evidence" value="ECO:0007669"/>
    <property type="project" value="UniProtKB-SubCell"/>
</dbReference>
<dbReference type="GO" id="GO:0009523">
    <property type="term" value="C:photosystem II"/>
    <property type="evidence" value="ECO:0007669"/>
    <property type="project" value="UniProtKB-KW"/>
</dbReference>
<dbReference type="GO" id="GO:0042301">
    <property type="term" value="F:phosphate ion binding"/>
    <property type="evidence" value="ECO:0007669"/>
    <property type="project" value="InterPro"/>
</dbReference>
<dbReference type="GO" id="GO:0015979">
    <property type="term" value="P:photosynthesis"/>
    <property type="evidence" value="ECO:0007669"/>
    <property type="project" value="UniProtKB-UniRule"/>
</dbReference>
<dbReference type="GO" id="GO:0050821">
    <property type="term" value="P:protein stabilization"/>
    <property type="evidence" value="ECO:0007669"/>
    <property type="project" value="InterPro"/>
</dbReference>
<dbReference type="Gene3D" id="1.20.5.880">
    <property type="entry name" value="Photosystem II reaction center protein H"/>
    <property type="match status" value="1"/>
</dbReference>
<dbReference type="HAMAP" id="MF_00752">
    <property type="entry name" value="PSII_PsbH"/>
    <property type="match status" value="1"/>
</dbReference>
<dbReference type="InterPro" id="IPR001056">
    <property type="entry name" value="PSII_PsbH"/>
</dbReference>
<dbReference type="InterPro" id="IPR036863">
    <property type="entry name" value="PSII_PsbH_sf"/>
</dbReference>
<dbReference type="NCBIfam" id="NF002728">
    <property type="entry name" value="PRK02624.1"/>
    <property type="match status" value="1"/>
</dbReference>
<dbReference type="PANTHER" id="PTHR34469">
    <property type="entry name" value="PHOTOSYSTEM II REACTION CENTER PROTEIN H"/>
    <property type="match status" value="1"/>
</dbReference>
<dbReference type="PANTHER" id="PTHR34469:SF4">
    <property type="entry name" value="PHOTOSYSTEM II REACTION CENTER PROTEIN H"/>
    <property type="match status" value="1"/>
</dbReference>
<dbReference type="Pfam" id="PF00737">
    <property type="entry name" value="PsbH"/>
    <property type="match status" value="1"/>
</dbReference>
<dbReference type="SUPFAM" id="SSF161025">
    <property type="entry name" value="Photosystem II 10 kDa phosphoprotein PsbH"/>
    <property type="match status" value="1"/>
</dbReference>
<comment type="function">
    <text evidence="2">One of the components of the core complex of photosystem II (PSII), required for its stability and/or assembly. PSII is a light-driven water:plastoquinone oxidoreductase that uses light energy to abstract electrons from H(2)O, generating O(2) and a proton gradient subsequently used for ATP formation. It consists of a core antenna complex that captures photons, and an electron transfer chain that converts photonic excitation into a charge separation.</text>
</comment>
<comment type="subunit">
    <text evidence="2">PSII is composed of 1 copy each of membrane proteins PsbA, PsbB, PsbC, PsbD, PsbE, PsbF, PsbH, PsbI, PsbJ, PsbK, PsbL, PsbM, PsbT, PsbX, PsbY, PsbZ, Psb30/Ycf12, at least 3 peripheral proteins of the oxygen-evolving complex and a large number of cofactors. It forms dimeric complexes.</text>
</comment>
<comment type="subcellular location">
    <subcellularLocation>
        <location evidence="2">Plastid</location>
        <location evidence="2">Chloroplast thylakoid membrane</location>
        <topology evidence="2">Single-pass membrane protein</topology>
    </subcellularLocation>
</comment>
<comment type="PTM">
    <text evidence="2">Phosphorylation is a light-dependent reaction catalyzed by a membrane-bound kinase; phosphorylation occurs on Thr residue(s) in the N-terminus of the protein.</text>
</comment>
<comment type="similarity">
    <text evidence="2">Belongs to the PsbH family.</text>
</comment>
<geneLocation type="chloroplast"/>
<keyword id="KW-0150">Chloroplast</keyword>
<keyword id="KW-0472">Membrane</keyword>
<keyword id="KW-0597">Phosphoprotein</keyword>
<keyword id="KW-0602">Photosynthesis</keyword>
<keyword id="KW-0604">Photosystem II</keyword>
<keyword id="KW-0934">Plastid</keyword>
<keyword id="KW-0793">Thylakoid</keyword>
<keyword id="KW-0812">Transmembrane</keyword>
<keyword id="KW-1133">Transmembrane helix</keyword>
<organism>
    <name type="scientific">Pinus thunbergii</name>
    <name type="common">Japanese black pine</name>
    <name type="synonym">Pinus thunbergiana</name>
    <dbReference type="NCBI Taxonomy" id="3350"/>
    <lineage>
        <taxon>Eukaryota</taxon>
        <taxon>Viridiplantae</taxon>
        <taxon>Streptophyta</taxon>
        <taxon>Embryophyta</taxon>
        <taxon>Tracheophyta</taxon>
        <taxon>Spermatophyta</taxon>
        <taxon>Pinopsida</taxon>
        <taxon>Pinidae</taxon>
        <taxon>Conifers I</taxon>
        <taxon>Pinales</taxon>
        <taxon>Pinaceae</taxon>
        <taxon>Pinus</taxon>
        <taxon>Pinus subgen. Pinus</taxon>
    </lineage>
</organism>
<evidence type="ECO:0000250" key="1">
    <source>
        <dbReference type="UniProtKB" id="P56780"/>
    </source>
</evidence>
<evidence type="ECO:0000255" key="2">
    <source>
        <dbReference type="HAMAP-Rule" id="MF_00752"/>
    </source>
</evidence>
<feature type="initiator methionine" description="Removed" evidence="1">
    <location>
        <position position="1"/>
    </location>
</feature>
<feature type="chain" id="PRO_0000070529" description="Photosystem II reaction center protein H">
    <location>
        <begin position="2"/>
        <end position="75"/>
    </location>
</feature>
<feature type="transmembrane region" description="Helical" evidence="2">
    <location>
        <begin position="41"/>
        <end position="61"/>
    </location>
</feature>
<feature type="modified residue" description="Phosphothreonine" evidence="2">
    <location>
        <position position="3"/>
    </location>
</feature>
<feature type="modified residue" description="Phosphothreonine" evidence="2">
    <location>
        <position position="5"/>
    </location>
</feature>
<sequence length="75" mass="8007">MATQTIDDTSKTTPKETLVGTTLKPLNSEYGKVAPGWGTTPLMGFAMALFAVFLSIILEIYNSSVLLDGIPVSWG</sequence>
<reference key="1">
    <citation type="journal article" date="1994" name="Proc. Natl. Acad. Sci. U.S.A.">
        <title>Loss of all ndh genes as determined by sequencing the entire chloroplast genome of the black pine Pinus thunbergii.</title>
        <authorList>
            <person name="Wakasugi T."/>
            <person name="Tsudzuki J."/>
            <person name="Ito S."/>
            <person name="Nakashima K."/>
            <person name="Tsudzuki T."/>
            <person name="Sugiura M."/>
        </authorList>
    </citation>
    <scope>NUCLEOTIDE SEQUENCE [LARGE SCALE GENOMIC DNA]</scope>
</reference>
<protein>
    <recommendedName>
        <fullName evidence="2">Photosystem II reaction center protein H</fullName>
        <shortName evidence="2">PSII-H</shortName>
    </recommendedName>
    <alternativeName>
        <fullName evidence="2">Photosystem II 10 kDa phosphoprotein</fullName>
    </alternativeName>
</protein>
<gene>
    <name evidence="2" type="primary">psbH</name>
</gene>